<reference key="1">
    <citation type="journal article" date="2004" name="Proc. Natl. Acad. Sci. U.S.A.">
        <title>Comparison of the genome of the oral pathogen Treponema denticola with other spirochete genomes.</title>
        <authorList>
            <person name="Seshadri R."/>
            <person name="Myers G.S.A."/>
            <person name="Tettelin H."/>
            <person name="Eisen J.A."/>
            <person name="Heidelberg J.F."/>
            <person name="Dodson R.J."/>
            <person name="Davidsen T.M."/>
            <person name="DeBoy R.T."/>
            <person name="Fouts D.E."/>
            <person name="Haft D.H."/>
            <person name="Selengut J."/>
            <person name="Ren Q."/>
            <person name="Brinkac L.M."/>
            <person name="Madupu R."/>
            <person name="Kolonay J.F."/>
            <person name="Durkin S.A."/>
            <person name="Daugherty S.C."/>
            <person name="Shetty J."/>
            <person name="Shvartsbeyn A."/>
            <person name="Gebregeorgis E."/>
            <person name="Geer K."/>
            <person name="Tsegaye G."/>
            <person name="Malek J.A."/>
            <person name="Ayodeji B."/>
            <person name="Shatsman S."/>
            <person name="McLeod M.P."/>
            <person name="Smajs D."/>
            <person name="Howell J.K."/>
            <person name="Pal S."/>
            <person name="Amin A."/>
            <person name="Vashisth P."/>
            <person name="McNeill T.Z."/>
            <person name="Xiang Q."/>
            <person name="Sodergren E."/>
            <person name="Baca E."/>
            <person name="Weinstock G.M."/>
            <person name="Norris S.J."/>
            <person name="Fraser C.M."/>
            <person name="Paulsen I.T."/>
        </authorList>
    </citation>
    <scope>NUCLEOTIDE SEQUENCE [LARGE SCALE GENOMIC DNA]</scope>
    <source>
        <strain>ATCC 35405 / DSM 14222 / CIP 103919 / JCM 8153 / KCTC 15104</strain>
    </source>
</reference>
<proteinExistence type="inferred from homology"/>
<feature type="chain" id="PRO_0000182912" description="Deoxyuridine 5'-triphosphate nucleotidohydrolase">
    <location>
        <begin position="1"/>
        <end position="144"/>
    </location>
</feature>
<feature type="binding site" evidence="1">
    <location>
        <begin position="63"/>
        <end position="65"/>
    </location>
    <ligand>
        <name>substrate</name>
    </ligand>
</feature>
<feature type="binding site" evidence="1">
    <location>
        <position position="76"/>
    </location>
    <ligand>
        <name>substrate</name>
    </ligand>
</feature>
<feature type="binding site" evidence="1">
    <location>
        <begin position="80"/>
        <end position="82"/>
    </location>
    <ligand>
        <name>substrate</name>
    </ligand>
</feature>
<comment type="function">
    <text evidence="1">This enzyme is involved in nucleotide metabolism: it produces dUMP, the immediate precursor of thymidine nucleotides and it decreases the intracellular concentration of dUTP so that uracil cannot be incorporated into DNA.</text>
</comment>
<comment type="catalytic activity">
    <reaction evidence="1">
        <text>dUTP + H2O = dUMP + diphosphate + H(+)</text>
        <dbReference type="Rhea" id="RHEA:10248"/>
        <dbReference type="ChEBI" id="CHEBI:15377"/>
        <dbReference type="ChEBI" id="CHEBI:15378"/>
        <dbReference type="ChEBI" id="CHEBI:33019"/>
        <dbReference type="ChEBI" id="CHEBI:61555"/>
        <dbReference type="ChEBI" id="CHEBI:246422"/>
        <dbReference type="EC" id="3.6.1.23"/>
    </reaction>
</comment>
<comment type="cofactor">
    <cofactor evidence="1">
        <name>Mg(2+)</name>
        <dbReference type="ChEBI" id="CHEBI:18420"/>
    </cofactor>
</comment>
<comment type="pathway">
    <text evidence="1">Pyrimidine metabolism; dUMP biosynthesis; dUMP from dCTP (dUTP route): step 2/2.</text>
</comment>
<comment type="similarity">
    <text evidence="1">Belongs to the dUTPase family.</text>
</comment>
<sequence>MEVFTKLKEGALLPEYKTSGSAGADLRALIEEPIILKPMQRCLIPTGLSVELPKGIELQVRPRSGLALKHGITVLNTPGTVDSDYRGELAVLLINLGNEDFKIENGDRIAQAVIAQAIQADFLQKDELSNTERGAGGYGSTGIA</sequence>
<gene>
    <name evidence="1" type="primary">dut</name>
    <name type="ordered locus">TDE_1042</name>
</gene>
<keyword id="KW-0378">Hydrolase</keyword>
<keyword id="KW-0460">Magnesium</keyword>
<keyword id="KW-0479">Metal-binding</keyword>
<keyword id="KW-0546">Nucleotide metabolism</keyword>
<keyword id="KW-1185">Reference proteome</keyword>
<accession>P61912</accession>
<protein>
    <recommendedName>
        <fullName evidence="1">Deoxyuridine 5'-triphosphate nucleotidohydrolase</fullName>
        <shortName evidence="1">dUTPase</shortName>
        <ecNumber evidence="1">3.6.1.23</ecNumber>
    </recommendedName>
    <alternativeName>
        <fullName evidence="1">dUTP pyrophosphatase</fullName>
    </alternativeName>
</protein>
<evidence type="ECO:0000255" key="1">
    <source>
        <dbReference type="HAMAP-Rule" id="MF_00116"/>
    </source>
</evidence>
<organism>
    <name type="scientific">Treponema denticola (strain ATCC 35405 / DSM 14222 / CIP 103919 / JCM 8153 / KCTC 15104)</name>
    <dbReference type="NCBI Taxonomy" id="243275"/>
    <lineage>
        <taxon>Bacteria</taxon>
        <taxon>Pseudomonadati</taxon>
        <taxon>Spirochaetota</taxon>
        <taxon>Spirochaetia</taxon>
        <taxon>Spirochaetales</taxon>
        <taxon>Treponemataceae</taxon>
        <taxon>Treponema</taxon>
    </lineage>
</organism>
<dbReference type="EC" id="3.6.1.23" evidence="1"/>
<dbReference type="EMBL" id="AE017226">
    <property type="protein sequence ID" value="AAS11531.1"/>
    <property type="molecule type" value="Genomic_DNA"/>
</dbReference>
<dbReference type="RefSeq" id="NP_971650.1">
    <property type="nucleotide sequence ID" value="NC_002967.9"/>
</dbReference>
<dbReference type="RefSeq" id="WP_002682351.1">
    <property type="nucleotide sequence ID" value="NC_002967.9"/>
</dbReference>
<dbReference type="SMR" id="P61912"/>
<dbReference type="STRING" id="243275.TDE_1042"/>
<dbReference type="PaxDb" id="243275-TDE_1042"/>
<dbReference type="GeneID" id="2741316"/>
<dbReference type="KEGG" id="tde:TDE_1042"/>
<dbReference type="PATRIC" id="fig|243275.7.peg.1002"/>
<dbReference type="eggNOG" id="COG0756">
    <property type="taxonomic scope" value="Bacteria"/>
</dbReference>
<dbReference type="HOGENOM" id="CLU_068508_1_2_12"/>
<dbReference type="OrthoDB" id="9809956at2"/>
<dbReference type="UniPathway" id="UPA00610">
    <property type="reaction ID" value="UER00666"/>
</dbReference>
<dbReference type="Proteomes" id="UP000008212">
    <property type="component" value="Chromosome"/>
</dbReference>
<dbReference type="GO" id="GO:0004170">
    <property type="term" value="F:dUTP diphosphatase activity"/>
    <property type="evidence" value="ECO:0007669"/>
    <property type="project" value="UniProtKB-UniRule"/>
</dbReference>
<dbReference type="GO" id="GO:0000287">
    <property type="term" value="F:magnesium ion binding"/>
    <property type="evidence" value="ECO:0007669"/>
    <property type="project" value="UniProtKB-UniRule"/>
</dbReference>
<dbReference type="GO" id="GO:0006226">
    <property type="term" value="P:dUMP biosynthetic process"/>
    <property type="evidence" value="ECO:0007669"/>
    <property type="project" value="UniProtKB-UniRule"/>
</dbReference>
<dbReference type="GO" id="GO:0046081">
    <property type="term" value="P:dUTP catabolic process"/>
    <property type="evidence" value="ECO:0007669"/>
    <property type="project" value="InterPro"/>
</dbReference>
<dbReference type="CDD" id="cd07557">
    <property type="entry name" value="trimeric_dUTPase"/>
    <property type="match status" value="1"/>
</dbReference>
<dbReference type="FunFam" id="2.70.40.10:FF:000002">
    <property type="entry name" value="dUTP diphosphatase"/>
    <property type="match status" value="1"/>
</dbReference>
<dbReference type="Gene3D" id="2.70.40.10">
    <property type="match status" value="1"/>
</dbReference>
<dbReference type="HAMAP" id="MF_00116">
    <property type="entry name" value="dUTPase_bact"/>
    <property type="match status" value="1"/>
</dbReference>
<dbReference type="InterPro" id="IPR008181">
    <property type="entry name" value="dUTPase"/>
</dbReference>
<dbReference type="InterPro" id="IPR029054">
    <property type="entry name" value="dUTPase-like"/>
</dbReference>
<dbReference type="InterPro" id="IPR036157">
    <property type="entry name" value="dUTPase-like_sf"/>
</dbReference>
<dbReference type="InterPro" id="IPR033704">
    <property type="entry name" value="dUTPase_trimeric"/>
</dbReference>
<dbReference type="NCBIfam" id="TIGR00576">
    <property type="entry name" value="dut"/>
    <property type="match status" value="1"/>
</dbReference>
<dbReference type="NCBIfam" id="NF001862">
    <property type="entry name" value="PRK00601.1"/>
    <property type="match status" value="1"/>
</dbReference>
<dbReference type="PANTHER" id="PTHR11241">
    <property type="entry name" value="DEOXYURIDINE 5'-TRIPHOSPHATE NUCLEOTIDOHYDROLASE"/>
    <property type="match status" value="1"/>
</dbReference>
<dbReference type="PANTHER" id="PTHR11241:SF0">
    <property type="entry name" value="DEOXYURIDINE 5'-TRIPHOSPHATE NUCLEOTIDOHYDROLASE"/>
    <property type="match status" value="1"/>
</dbReference>
<dbReference type="Pfam" id="PF00692">
    <property type="entry name" value="dUTPase"/>
    <property type="match status" value="1"/>
</dbReference>
<dbReference type="SUPFAM" id="SSF51283">
    <property type="entry name" value="dUTPase-like"/>
    <property type="match status" value="1"/>
</dbReference>
<name>DUT_TREDE</name>